<organism>
    <name type="scientific">Campylobacter jejuni subsp. jejuni serotype O:6 (strain 81116 / NCTC 11828)</name>
    <dbReference type="NCBI Taxonomy" id="407148"/>
    <lineage>
        <taxon>Bacteria</taxon>
        <taxon>Pseudomonadati</taxon>
        <taxon>Campylobacterota</taxon>
        <taxon>Epsilonproteobacteria</taxon>
        <taxon>Campylobacterales</taxon>
        <taxon>Campylobacteraceae</taxon>
        <taxon>Campylobacter</taxon>
    </lineage>
</organism>
<proteinExistence type="inferred from homology"/>
<feature type="chain" id="PRO_1000072006" description="Enolase">
    <location>
        <begin position="1"/>
        <end position="414"/>
    </location>
</feature>
<feature type="active site" description="Proton donor" evidence="1">
    <location>
        <position position="204"/>
    </location>
</feature>
<feature type="active site" description="Proton acceptor" evidence="1">
    <location>
        <position position="332"/>
    </location>
</feature>
<feature type="binding site" evidence="1">
    <location>
        <position position="162"/>
    </location>
    <ligand>
        <name>(2R)-2-phosphoglycerate</name>
        <dbReference type="ChEBI" id="CHEBI:58289"/>
    </ligand>
</feature>
<feature type="binding site" evidence="1">
    <location>
        <position position="239"/>
    </location>
    <ligand>
        <name>Mg(2+)</name>
        <dbReference type="ChEBI" id="CHEBI:18420"/>
    </ligand>
</feature>
<feature type="binding site" evidence="1">
    <location>
        <position position="280"/>
    </location>
    <ligand>
        <name>Mg(2+)</name>
        <dbReference type="ChEBI" id="CHEBI:18420"/>
    </ligand>
</feature>
<feature type="binding site" evidence="1">
    <location>
        <position position="307"/>
    </location>
    <ligand>
        <name>Mg(2+)</name>
        <dbReference type="ChEBI" id="CHEBI:18420"/>
    </ligand>
</feature>
<feature type="binding site" evidence="1">
    <location>
        <position position="332"/>
    </location>
    <ligand>
        <name>(2R)-2-phosphoglycerate</name>
        <dbReference type="ChEBI" id="CHEBI:58289"/>
    </ligand>
</feature>
<feature type="binding site" evidence="1">
    <location>
        <position position="361"/>
    </location>
    <ligand>
        <name>(2R)-2-phosphoglycerate</name>
        <dbReference type="ChEBI" id="CHEBI:58289"/>
    </ligand>
</feature>
<feature type="binding site" evidence="1">
    <location>
        <position position="362"/>
    </location>
    <ligand>
        <name>(2R)-2-phosphoglycerate</name>
        <dbReference type="ChEBI" id="CHEBI:58289"/>
    </ligand>
</feature>
<feature type="binding site" evidence="1">
    <location>
        <position position="383"/>
    </location>
    <ligand>
        <name>(2R)-2-phosphoglycerate</name>
        <dbReference type="ChEBI" id="CHEBI:58289"/>
    </ligand>
</feature>
<accession>A8FNY3</accession>
<protein>
    <recommendedName>
        <fullName evidence="1">Enolase</fullName>
        <ecNumber evidence="1">4.2.1.11</ecNumber>
    </recommendedName>
    <alternativeName>
        <fullName evidence="1">2-phospho-D-glycerate hydro-lyase</fullName>
    </alternativeName>
    <alternativeName>
        <fullName evidence="1">2-phosphoglycerate dehydratase</fullName>
    </alternativeName>
</protein>
<keyword id="KW-0963">Cytoplasm</keyword>
<keyword id="KW-0324">Glycolysis</keyword>
<keyword id="KW-0456">Lyase</keyword>
<keyword id="KW-0460">Magnesium</keyword>
<keyword id="KW-0479">Metal-binding</keyword>
<keyword id="KW-0964">Secreted</keyword>
<gene>
    <name evidence="1" type="primary">eno</name>
    <name type="ordered locus">C8J_1573</name>
</gene>
<evidence type="ECO:0000255" key="1">
    <source>
        <dbReference type="HAMAP-Rule" id="MF_00318"/>
    </source>
</evidence>
<dbReference type="EC" id="4.2.1.11" evidence="1"/>
<dbReference type="EMBL" id="CP000814">
    <property type="protein sequence ID" value="ABV53170.1"/>
    <property type="molecule type" value="Genomic_DNA"/>
</dbReference>
<dbReference type="RefSeq" id="WP_002856489.1">
    <property type="nucleotide sequence ID" value="NC_009839.1"/>
</dbReference>
<dbReference type="SMR" id="A8FNY3"/>
<dbReference type="KEGG" id="cju:C8J_1573"/>
<dbReference type="HOGENOM" id="CLU_031223_2_1_7"/>
<dbReference type="UniPathway" id="UPA00109">
    <property type="reaction ID" value="UER00187"/>
</dbReference>
<dbReference type="GO" id="GO:0009986">
    <property type="term" value="C:cell surface"/>
    <property type="evidence" value="ECO:0007669"/>
    <property type="project" value="UniProtKB-SubCell"/>
</dbReference>
<dbReference type="GO" id="GO:0005576">
    <property type="term" value="C:extracellular region"/>
    <property type="evidence" value="ECO:0007669"/>
    <property type="project" value="UniProtKB-SubCell"/>
</dbReference>
<dbReference type="GO" id="GO:0000015">
    <property type="term" value="C:phosphopyruvate hydratase complex"/>
    <property type="evidence" value="ECO:0007669"/>
    <property type="project" value="InterPro"/>
</dbReference>
<dbReference type="GO" id="GO:0000287">
    <property type="term" value="F:magnesium ion binding"/>
    <property type="evidence" value="ECO:0007669"/>
    <property type="project" value="UniProtKB-UniRule"/>
</dbReference>
<dbReference type="GO" id="GO:0004634">
    <property type="term" value="F:phosphopyruvate hydratase activity"/>
    <property type="evidence" value="ECO:0007669"/>
    <property type="project" value="UniProtKB-UniRule"/>
</dbReference>
<dbReference type="GO" id="GO:0006096">
    <property type="term" value="P:glycolytic process"/>
    <property type="evidence" value="ECO:0007669"/>
    <property type="project" value="UniProtKB-UniRule"/>
</dbReference>
<dbReference type="CDD" id="cd03313">
    <property type="entry name" value="enolase"/>
    <property type="match status" value="1"/>
</dbReference>
<dbReference type="Gene3D" id="3.20.20.120">
    <property type="entry name" value="Enolase-like C-terminal domain"/>
    <property type="match status" value="1"/>
</dbReference>
<dbReference type="Gene3D" id="3.30.390.10">
    <property type="entry name" value="Enolase-like, N-terminal domain"/>
    <property type="match status" value="1"/>
</dbReference>
<dbReference type="HAMAP" id="MF_00318">
    <property type="entry name" value="Enolase"/>
    <property type="match status" value="1"/>
</dbReference>
<dbReference type="InterPro" id="IPR000941">
    <property type="entry name" value="Enolase"/>
</dbReference>
<dbReference type="InterPro" id="IPR036849">
    <property type="entry name" value="Enolase-like_C_sf"/>
</dbReference>
<dbReference type="InterPro" id="IPR029017">
    <property type="entry name" value="Enolase-like_N"/>
</dbReference>
<dbReference type="InterPro" id="IPR020810">
    <property type="entry name" value="Enolase_C"/>
</dbReference>
<dbReference type="InterPro" id="IPR020809">
    <property type="entry name" value="Enolase_CS"/>
</dbReference>
<dbReference type="InterPro" id="IPR020811">
    <property type="entry name" value="Enolase_N"/>
</dbReference>
<dbReference type="NCBIfam" id="TIGR01060">
    <property type="entry name" value="eno"/>
    <property type="match status" value="1"/>
</dbReference>
<dbReference type="PANTHER" id="PTHR11902">
    <property type="entry name" value="ENOLASE"/>
    <property type="match status" value="1"/>
</dbReference>
<dbReference type="PANTHER" id="PTHR11902:SF1">
    <property type="entry name" value="ENOLASE"/>
    <property type="match status" value="1"/>
</dbReference>
<dbReference type="Pfam" id="PF00113">
    <property type="entry name" value="Enolase_C"/>
    <property type="match status" value="1"/>
</dbReference>
<dbReference type="Pfam" id="PF03952">
    <property type="entry name" value="Enolase_N"/>
    <property type="match status" value="1"/>
</dbReference>
<dbReference type="PIRSF" id="PIRSF001400">
    <property type="entry name" value="Enolase"/>
    <property type="match status" value="1"/>
</dbReference>
<dbReference type="PRINTS" id="PR00148">
    <property type="entry name" value="ENOLASE"/>
</dbReference>
<dbReference type="SFLD" id="SFLDS00001">
    <property type="entry name" value="Enolase"/>
    <property type="match status" value="1"/>
</dbReference>
<dbReference type="SFLD" id="SFLDF00002">
    <property type="entry name" value="enolase"/>
    <property type="match status" value="1"/>
</dbReference>
<dbReference type="SMART" id="SM01192">
    <property type="entry name" value="Enolase_C"/>
    <property type="match status" value="1"/>
</dbReference>
<dbReference type="SMART" id="SM01193">
    <property type="entry name" value="Enolase_N"/>
    <property type="match status" value="1"/>
</dbReference>
<dbReference type="SUPFAM" id="SSF51604">
    <property type="entry name" value="Enolase C-terminal domain-like"/>
    <property type="match status" value="1"/>
</dbReference>
<dbReference type="SUPFAM" id="SSF54826">
    <property type="entry name" value="Enolase N-terminal domain-like"/>
    <property type="match status" value="1"/>
</dbReference>
<dbReference type="PROSITE" id="PS00164">
    <property type="entry name" value="ENOLASE"/>
    <property type="match status" value="1"/>
</dbReference>
<reference key="1">
    <citation type="journal article" date="2007" name="J. Bacteriol.">
        <title>The complete genome sequence of Campylobacter jejuni strain 81116 (NCTC11828).</title>
        <authorList>
            <person name="Pearson B.M."/>
            <person name="Gaskin D.J.H."/>
            <person name="Segers R.P.A.M."/>
            <person name="Wells J.M."/>
            <person name="Nuijten P.J.M."/>
            <person name="van Vliet A.H.M."/>
        </authorList>
    </citation>
    <scope>NUCLEOTIDE SEQUENCE [LARGE SCALE GENOMIC DNA]</scope>
    <source>
        <strain>81116 / NCTC 11828</strain>
    </source>
</reference>
<sequence length="414" mass="44949">MLVIEDVRAYEVLDSRGNPTVKAEVTLSDGSVGAAIVPSGASTGSKEALELRDNDERFGGKGVLKAVANVNETIADEILGLDAFNQTQLDDTLRELDGTNNYSNLGANATLGVSMATARAAAAALGMPLYRYLGGANASILPVPMCNIINGGAHANNNVDFQEFMIMPFGFTSFKEALRSVCEIYAILKKELANSGHSTALGDEGGFAPNLANNTEPIDLLMTCIKKAGYENRVKIALDVASTEFFKDGKYHMEGKAFSSEDLIERYVELCAKYPICSIEDGLAENDFEGWIKLTEKLGNKIQLVGDDLFVTNEDILREGIIKKMANAVLIKPNQIGTITQTMRTVRLAQRNNYKCVMSHRSGESEDAFIADFAVALNTGQIKTGALARGERTAKYNRLLEIELESDEYLGEKL</sequence>
<name>ENO_CAMJ8</name>
<comment type="function">
    <text evidence="1">Catalyzes the reversible conversion of 2-phosphoglycerate (2-PG) into phosphoenolpyruvate (PEP). It is essential for the degradation of carbohydrates via glycolysis.</text>
</comment>
<comment type="catalytic activity">
    <reaction evidence="1">
        <text>(2R)-2-phosphoglycerate = phosphoenolpyruvate + H2O</text>
        <dbReference type="Rhea" id="RHEA:10164"/>
        <dbReference type="ChEBI" id="CHEBI:15377"/>
        <dbReference type="ChEBI" id="CHEBI:58289"/>
        <dbReference type="ChEBI" id="CHEBI:58702"/>
        <dbReference type="EC" id="4.2.1.11"/>
    </reaction>
</comment>
<comment type="cofactor">
    <cofactor evidence="1">
        <name>Mg(2+)</name>
        <dbReference type="ChEBI" id="CHEBI:18420"/>
    </cofactor>
    <text evidence="1">Binds a second Mg(2+) ion via substrate during catalysis.</text>
</comment>
<comment type="pathway">
    <text evidence="1">Carbohydrate degradation; glycolysis; pyruvate from D-glyceraldehyde 3-phosphate: step 4/5.</text>
</comment>
<comment type="subcellular location">
    <subcellularLocation>
        <location evidence="1">Cytoplasm</location>
    </subcellularLocation>
    <subcellularLocation>
        <location evidence="1">Secreted</location>
    </subcellularLocation>
    <subcellularLocation>
        <location evidence="1">Cell surface</location>
    </subcellularLocation>
    <text evidence="1">Fractions of enolase are present in both the cytoplasm and on the cell surface.</text>
</comment>
<comment type="similarity">
    <text evidence="1">Belongs to the enolase family.</text>
</comment>